<accession>Q1CD75</accession>
<accession>D1Q284</accession>
<evidence type="ECO:0000255" key="1">
    <source>
        <dbReference type="HAMAP-Rule" id="MF_02001"/>
    </source>
</evidence>
<evidence type="ECO:0000255" key="2">
    <source>
        <dbReference type="PROSITE-ProRule" id="PRU00285"/>
    </source>
</evidence>
<protein>
    <recommendedName>
        <fullName evidence="1">Small heat shock protein IbpB</fullName>
    </recommendedName>
    <alternativeName>
        <fullName evidence="1">16 kDa heat shock protein B</fullName>
    </alternativeName>
</protein>
<feature type="chain" id="PRO_1000022034" description="Small heat shock protein IbpB">
    <location>
        <begin position="1"/>
        <end position="154"/>
    </location>
</feature>
<feature type="domain" description="sHSP" evidence="2">
    <location>
        <begin position="26"/>
        <end position="137"/>
    </location>
</feature>
<proteinExistence type="inferred from homology"/>
<keyword id="KW-0143">Chaperone</keyword>
<keyword id="KW-0963">Cytoplasm</keyword>
<keyword id="KW-0346">Stress response</keyword>
<gene>
    <name evidence="1" type="primary">ibpB</name>
    <name type="ordered locus">YPN_3728</name>
    <name type="ORF">YP516_4240</name>
</gene>
<organism>
    <name type="scientific">Yersinia pestis bv. Antiqua (strain Nepal516)</name>
    <dbReference type="NCBI Taxonomy" id="377628"/>
    <lineage>
        <taxon>Bacteria</taxon>
        <taxon>Pseudomonadati</taxon>
        <taxon>Pseudomonadota</taxon>
        <taxon>Gammaproteobacteria</taxon>
        <taxon>Enterobacterales</taxon>
        <taxon>Yersiniaceae</taxon>
        <taxon>Yersinia</taxon>
    </lineage>
</organism>
<comment type="function">
    <text evidence="1">Associates with aggregated proteins, together with IbpA, to stabilize and protect them from irreversible denaturation and extensive proteolysis during heat shock and oxidative stress. Aggregated proteins bound to the IbpAB complex are more efficiently refolded and reactivated by the ATP-dependent chaperone systems ClpB and DnaK/DnaJ/GrpE. Its activity is ATP-independent.</text>
</comment>
<comment type="subunit">
    <text evidence="1">Homodimer. Forms homomultimers of about 100-150 subunits at optimal growth temperatures. Conformation changes to oligomers at high temperatures or high ionic concentrations. The decrease in size of the multimers is accompanied by an increase in chaperone activity.</text>
</comment>
<comment type="subcellular location">
    <subcellularLocation>
        <location evidence="1">Cytoplasm</location>
    </subcellularLocation>
</comment>
<comment type="domain">
    <text evidence="1">The N- and C-terminal flexible termini are involved in oligomerization and in the binding of non-native substrate proteins, and are essential for chaperone activity.</text>
</comment>
<comment type="similarity">
    <text evidence="1 2">Belongs to the small heat shock protein (HSP20) family.</text>
</comment>
<dbReference type="EMBL" id="CP000305">
    <property type="protein sequence ID" value="ABG20055.1"/>
    <property type="molecule type" value="Genomic_DNA"/>
</dbReference>
<dbReference type="EMBL" id="ACNQ01000019">
    <property type="protein sequence ID" value="EEO74637.1"/>
    <property type="molecule type" value="Genomic_DNA"/>
</dbReference>
<dbReference type="RefSeq" id="WP_002209635.1">
    <property type="nucleotide sequence ID" value="NZ_ACNQ01000019.1"/>
</dbReference>
<dbReference type="SMR" id="Q1CD75"/>
<dbReference type="GeneID" id="57974634"/>
<dbReference type="KEGG" id="ypn:YPN_3728"/>
<dbReference type="HOGENOM" id="CLU_046737_4_2_6"/>
<dbReference type="Proteomes" id="UP000008936">
    <property type="component" value="Chromosome"/>
</dbReference>
<dbReference type="GO" id="GO:0005737">
    <property type="term" value="C:cytoplasm"/>
    <property type="evidence" value="ECO:0007669"/>
    <property type="project" value="UniProtKB-SubCell"/>
</dbReference>
<dbReference type="GO" id="GO:0050821">
    <property type="term" value="P:protein stabilization"/>
    <property type="evidence" value="ECO:0007669"/>
    <property type="project" value="UniProtKB-UniRule"/>
</dbReference>
<dbReference type="CDD" id="cd06470">
    <property type="entry name" value="ACD_IbpA-B_like"/>
    <property type="match status" value="1"/>
</dbReference>
<dbReference type="Gene3D" id="2.60.40.790">
    <property type="match status" value="1"/>
</dbReference>
<dbReference type="HAMAP" id="MF_02001">
    <property type="entry name" value="HSP20_IbpB"/>
    <property type="match status" value="1"/>
</dbReference>
<dbReference type="InterPro" id="IPR002068">
    <property type="entry name" value="A-crystallin/Hsp20_dom"/>
</dbReference>
<dbReference type="InterPro" id="IPR037913">
    <property type="entry name" value="ACD_IbpA/B"/>
</dbReference>
<dbReference type="InterPro" id="IPR008978">
    <property type="entry name" value="HSP20-like_chaperone"/>
</dbReference>
<dbReference type="InterPro" id="IPR022848">
    <property type="entry name" value="HSP20_IbpB"/>
</dbReference>
<dbReference type="NCBIfam" id="NF008618">
    <property type="entry name" value="PRK11597.1"/>
    <property type="match status" value="1"/>
</dbReference>
<dbReference type="PANTHER" id="PTHR47062">
    <property type="match status" value="1"/>
</dbReference>
<dbReference type="PANTHER" id="PTHR47062:SF2">
    <property type="entry name" value="SMALL HEAT SHOCK PROTEIN IBPB"/>
    <property type="match status" value="1"/>
</dbReference>
<dbReference type="Pfam" id="PF00011">
    <property type="entry name" value="HSP20"/>
    <property type="match status" value="1"/>
</dbReference>
<dbReference type="SUPFAM" id="SSF49764">
    <property type="entry name" value="HSP20-like chaperones"/>
    <property type="match status" value="1"/>
</dbReference>
<dbReference type="PROSITE" id="PS01031">
    <property type="entry name" value="SHSP"/>
    <property type="match status" value="1"/>
</dbReference>
<name>IBPB_YERPN</name>
<sequence>MRNYDLSPLLRQWIGFDKLASTMQGGQEPQGFPPYNIEKTDDNHYRISLALAGFKQSELDIEVEGPRLTVRGKPTPVEKQVEYLHQGLVRKEFSLTFTLAEHLNVDNAQFENGLLHIDLLRQVPEALQPQRIAIGSATPQERQVLESPEAPDQQ</sequence>
<reference key="1">
    <citation type="journal article" date="2006" name="J. Bacteriol.">
        <title>Complete genome sequence of Yersinia pestis strains Antiqua and Nepal516: evidence of gene reduction in an emerging pathogen.</title>
        <authorList>
            <person name="Chain P.S.G."/>
            <person name="Hu P."/>
            <person name="Malfatti S.A."/>
            <person name="Radnedge L."/>
            <person name="Larimer F."/>
            <person name="Vergez L.M."/>
            <person name="Worsham P."/>
            <person name="Chu M.C."/>
            <person name="Andersen G.L."/>
        </authorList>
    </citation>
    <scope>NUCLEOTIDE SEQUENCE [LARGE SCALE GENOMIC DNA]</scope>
    <source>
        <strain>Nepal516</strain>
    </source>
</reference>
<reference key="2">
    <citation type="submission" date="2009-04" db="EMBL/GenBank/DDBJ databases">
        <title>Yersinia pestis Nepal516A whole genome shotgun sequencing project.</title>
        <authorList>
            <person name="Plunkett G. III"/>
            <person name="Anderson B.D."/>
            <person name="Baumler D.J."/>
            <person name="Burland V."/>
            <person name="Cabot E.L."/>
            <person name="Glasner J.D."/>
            <person name="Mau B."/>
            <person name="Neeno-Eckwall E."/>
            <person name="Perna N.T."/>
            <person name="Munk A.C."/>
            <person name="Tapia R."/>
            <person name="Green L.D."/>
            <person name="Rogers Y.C."/>
            <person name="Detter J.C."/>
            <person name="Bruce D.C."/>
            <person name="Brettin T.S."/>
        </authorList>
    </citation>
    <scope>NUCLEOTIDE SEQUENCE [LARGE SCALE GENOMIC DNA]</scope>
    <source>
        <strain>Nepal516</strain>
    </source>
</reference>